<keyword id="KW-0131">Cell cycle</keyword>
<keyword id="KW-0132">Cell division</keyword>
<keyword id="KW-0159">Chromosome partition</keyword>
<keyword id="KW-0963">Cytoplasm</keyword>
<comment type="function">
    <text evidence="1">Participates in chromosomal partition during cell division. May act via the formation of a condensin-like complex containing Smc and ScpA that pull DNA away from mid-cell into both cell halves.</text>
</comment>
<comment type="subunit">
    <text evidence="1">Homodimer. Homodimerization may be required to stabilize the binding of ScpA to the Smc head domains. Component of a cohesin-like complex composed of ScpA, ScpB and the Smc homodimer, in which ScpA and ScpB bind to the head domain of Smc. The presence of the three proteins is required for the association of the complex with DNA.</text>
</comment>
<comment type="subcellular location">
    <subcellularLocation>
        <location evidence="1">Cytoplasm</location>
    </subcellularLocation>
    <text evidence="1">Associated with two foci at the outer edges of the nucleoid region in young cells, and at four foci within both cell halves in older cells.</text>
</comment>
<comment type="similarity">
    <text evidence="1">Belongs to the ScpB family.</text>
</comment>
<name>SCPB_PEDPA</name>
<sequence length="196" mass="22008">MNNEQKVEALLFVAGAEGISVEELSNFTGYAKPAILTMLDNLEKNYEVNSKTALKLIQTGGTYKLVTKPELASILEKYFDRNSRSGLSPAALEILSIVAYRQPITRIEIDQIRGVQSGTTLQNLVLRNLVKVVGRLEEPGRPKTYGTTDEFLDYFGLEDIKDLPKLEKVGEDSELDDSDLFLQEFESKMNLNNKEK</sequence>
<protein>
    <recommendedName>
        <fullName evidence="1">Segregation and condensation protein B</fullName>
    </recommendedName>
</protein>
<organism>
    <name type="scientific">Pediococcus pentosaceus (strain ATCC 25745 / CCUG 21536 / LMG 10740 / 183-1w)</name>
    <dbReference type="NCBI Taxonomy" id="278197"/>
    <lineage>
        <taxon>Bacteria</taxon>
        <taxon>Bacillati</taxon>
        <taxon>Bacillota</taxon>
        <taxon>Bacilli</taxon>
        <taxon>Lactobacillales</taxon>
        <taxon>Lactobacillaceae</taxon>
        <taxon>Pediococcus</taxon>
    </lineage>
</organism>
<proteinExistence type="inferred from homology"/>
<accession>Q03F82</accession>
<evidence type="ECO:0000255" key="1">
    <source>
        <dbReference type="HAMAP-Rule" id="MF_01804"/>
    </source>
</evidence>
<dbReference type="EMBL" id="CP000422">
    <property type="protein sequence ID" value="ABJ68140.1"/>
    <property type="molecule type" value="Genomic_DNA"/>
</dbReference>
<dbReference type="RefSeq" id="WP_011673481.1">
    <property type="nucleotide sequence ID" value="NC_008525.1"/>
</dbReference>
<dbReference type="SMR" id="Q03F82"/>
<dbReference type="STRING" id="278197.PEPE_1085"/>
<dbReference type="GeneID" id="33062838"/>
<dbReference type="KEGG" id="ppe:PEPE_1085"/>
<dbReference type="eggNOG" id="COG1386">
    <property type="taxonomic scope" value="Bacteria"/>
</dbReference>
<dbReference type="HOGENOM" id="CLU_045647_5_3_9"/>
<dbReference type="OrthoDB" id="9806226at2"/>
<dbReference type="Proteomes" id="UP000000773">
    <property type="component" value="Chromosome"/>
</dbReference>
<dbReference type="GO" id="GO:0005737">
    <property type="term" value="C:cytoplasm"/>
    <property type="evidence" value="ECO:0007669"/>
    <property type="project" value="UniProtKB-SubCell"/>
</dbReference>
<dbReference type="GO" id="GO:0051301">
    <property type="term" value="P:cell division"/>
    <property type="evidence" value="ECO:0007669"/>
    <property type="project" value="UniProtKB-KW"/>
</dbReference>
<dbReference type="GO" id="GO:0051304">
    <property type="term" value="P:chromosome separation"/>
    <property type="evidence" value="ECO:0007669"/>
    <property type="project" value="InterPro"/>
</dbReference>
<dbReference type="GO" id="GO:0006260">
    <property type="term" value="P:DNA replication"/>
    <property type="evidence" value="ECO:0007669"/>
    <property type="project" value="UniProtKB-UniRule"/>
</dbReference>
<dbReference type="Gene3D" id="1.10.10.10">
    <property type="entry name" value="Winged helix-like DNA-binding domain superfamily/Winged helix DNA-binding domain"/>
    <property type="match status" value="2"/>
</dbReference>
<dbReference type="HAMAP" id="MF_01804">
    <property type="entry name" value="ScpB"/>
    <property type="match status" value="1"/>
</dbReference>
<dbReference type="InterPro" id="IPR005234">
    <property type="entry name" value="ScpB_csome_segregation"/>
</dbReference>
<dbReference type="InterPro" id="IPR036388">
    <property type="entry name" value="WH-like_DNA-bd_sf"/>
</dbReference>
<dbReference type="InterPro" id="IPR036390">
    <property type="entry name" value="WH_DNA-bd_sf"/>
</dbReference>
<dbReference type="NCBIfam" id="TIGR00281">
    <property type="entry name" value="SMC-Scp complex subunit ScpB"/>
    <property type="match status" value="1"/>
</dbReference>
<dbReference type="PANTHER" id="PTHR34298">
    <property type="entry name" value="SEGREGATION AND CONDENSATION PROTEIN B"/>
    <property type="match status" value="1"/>
</dbReference>
<dbReference type="PANTHER" id="PTHR34298:SF2">
    <property type="entry name" value="SEGREGATION AND CONDENSATION PROTEIN B"/>
    <property type="match status" value="1"/>
</dbReference>
<dbReference type="Pfam" id="PF04079">
    <property type="entry name" value="SMC_ScpB"/>
    <property type="match status" value="1"/>
</dbReference>
<dbReference type="PIRSF" id="PIRSF019345">
    <property type="entry name" value="ScpB"/>
    <property type="match status" value="1"/>
</dbReference>
<dbReference type="SUPFAM" id="SSF46785">
    <property type="entry name" value="Winged helix' DNA-binding domain"/>
    <property type="match status" value="2"/>
</dbReference>
<reference key="1">
    <citation type="journal article" date="2006" name="Proc. Natl. Acad. Sci. U.S.A.">
        <title>Comparative genomics of the lactic acid bacteria.</title>
        <authorList>
            <person name="Makarova K.S."/>
            <person name="Slesarev A."/>
            <person name="Wolf Y.I."/>
            <person name="Sorokin A."/>
            <person name="Mirkin B."/>
            <person name="Koonin E.V."/>
            <person name="Pavlov A."/>
            <person name="Pavlova N."/>
            <person name="Karamychev V."/>
            <person name="Polouchine N."/>
            <person name="Shakhova V."/>
            <person name="Grigoriev I."/>
            <person name="Lou Y."/>
            <person name="Rohksar D."/>
            <person name="Lucas S."/>
            <person name="Huang K."/>
            <person name="Goodstein D.M."/>
            <person name="Hawkins T."/>
            <person name="Plengvidhya V."/>
            <person name="Welker D."/>
            <person name="Hughes J."/>
            <person name="Goh Y."/>
            <person name="Benson A."/>
            <person name="Baldwin K."/>
            <person name="Lee J.-H."/>
            <person name="Diaz-Muniz I."/>
            <person name="Dosti B."/>
            <person name="Smeianov V."/>
            <person name="Wechter W."/>
            <person name="Barabote R."/>
            <person name="Lorca G."/>
            <person name="Altermann E."/>
            <person name="Barrangou R."/>
            <person name="Ganesan B."/>
            <person name="Xie Y."/>
            <person name="Rawsthorne H."/>
            <person name="Tamir D."/>
            <person name="Parker C."/>
            <person name="Breidt F."/>
            <person name="Broadbent J.R."/>
            <person name="Hutkins R."/>
            <person name="O'Sullivan D."/>
            <person name="Steele J."/>
            <person name="Unlu G."/>
            <person name="Saier M.H. Jr."/>
            <person name="Klaenhammer T."/>
            <person name="Richardson P."/>
            <person name="Kozyavkin S."/>
            <person name="Weimer B.C."/>
            <person name="Mills D.A."/>
        </authorList>
    </citation>
    <scope>NUCLEOTIDE SEQUENCE [LARGE SCALE GENOMIC DNA]</scope>
    <source>
        <strain>ATCC 25745 / CCUG 21536 / LMG 10740 / 183-1w</strain>
    </source>
</reference>
<gene>
    <name evidence="1" type="primary">scpB</name>
    <name type="ordered locus">PEPE_1085</name>
</gene>
<feature type="chain" id="PRO_1000069960" description="Segregation and condensation protein B">
    <location>
        <begin position="1"/>
        <end position="196"/>
    </location>
</feature>